<comment type="function">
    <text>Inhibitor of cysteine proteases. May protect the plant by inhibiting proteases of invading organisms.</text>
</comment>
<comment type="subcellular location">
    <subcellularLocation>
        <location evidence="1">Vacuole</location>
    </subcellularLocation>
</comment>
<comment type="similarity">
    <text evidence="2">Belongs to the protease inhibitor I3 (leguminous Kunitz-type inhibitor) family.</text>
</comment>
<name>CPI8_SOLTU</name>
<feature type="signal peptide" evidence="1">
    <location>
        <begin position="1" status="less than"/>
        <end position="26"/>
    </location>
</feature>
<feature type="propeptide" id="PRO_0000016926" evidence="1">
    <location>
        <begin position="27"/>
        <end position="42"/>
    </location>
</feature>
<feature type="chain" id="PRO_0000016927" description="Cysteine protease inhibitor 8">
    <location>
        <begin position="43"/>
        <end position="221"/>
    </location>
</feature>
<feature type="short sequence motif" description="Vacuolar targeting signal" evidence="1">
    <location>
        <begin position="29"/>
        <end position="34"/>
    </location>
</feature>
<feature type="disulfide bond" evidence="1">
    <location>
        <begin position="84"/>
        <end position="136"/>
    </location>
</feature>
<feature type="disulfide bond" evidence="1">
    <location>
        <begin position="184"/>
        <end position="190"/>
    </location>
</feature>
<feature type="non-terminal residue">
    <location>
        <position position="1"/>
    </location>
</feature>
<organism>
    <name type="scientific">Solanum tuberosum</name>
    <name type="common">Potato</name>
    <dbReference type="NCBI Taxonomy" id="4113"/>
    <lineage>
        <taxon>Eukaryota</taxon>
        <taxon>Viridiplantae</taxon>
        <taxon>Streptophyta</taxon>
        <taxon>Embryophyta</taxon>
        <taxon>Tracheophyta</taxon>
        <taxon>Spermatophyta</taxon>
        <taxon>Magnoliopsida</taxon>
        <taxon>eudicotyledons</taxon>
        <taxon>Gunneridae</taxon>
        <taxon>Pentapetalae</taxon>
        <taxon>asterids</taxon>
        <taxon>lamiids</taxon>
        <taxon>Solanales</taxon>
        <taxon>Solanaceae</taxon>
        <taxon>Solanoideae</taxon>
        <taxon>Solaneae</taxon>
        <taxon>Solanum</taxon>
    </lineage>
</organism>
<accession>O24384</accession>
<reference key="1">
    <citation type="journal article" date="1997" name="Plant Mol. Biol.">
        <title>Potato cysteine proteinase inhibitor gene family: molecular cloning, characterisation and immunocytochemical localisation studies.</title>
        <authorList>
            <person name="Gruden K."/>
            <person name="Strukelj B."/>
            <person name="Ravnikar M."/>
            <person name="Poljsak-Prijatelj M."/>
            <person name="Mavric I."/>
            <person name="Brzin J."/>
            <person name="Pungercar J."/>
            <person name="Kregar I."/>
        </authorList>
    </citation>
    <scope>NUCLEOTIDE SEQUENCE [MRNA]</scope>
    <source>
        <strain>cv. Ulster Sceptre</strain>
        <tissue>Tuber</tissue>
    </source>
</reference>
<protein>
    <recommendedName>
        <fullName>Cysteine protease inhibitor 8</fullName>
    </recommendedName>
    <alternativeName>
        <fullName>PCPI-8</fullName>
        <shortName>Pcpi8</shortName>
    </alternativeName>
</protein>
<proteinExistence type="evidence at transcript level"/>
<dbReference type="EMBL" id="U59273">
    <property type="protein sequence ID" value="AAB63250.1"/>
    <property type="molecule type" value="mRNA"/>
</dbReference>
<dbReference type="PIR" id="T07750">
    <property type="entry name" value="T07750"/>
</dbReference>
<dbReference type="SMR" id="O24384"/>
<dbReference type="STRING" id="4113.O24384"/>
<dbReference type="MEROPS" id="I03.017"/>
<dbReference type="PaxDb" id="4113-PGSC0003DMT400026289"/>
<dbReference type="InParanoid" id="O24384"/>
<dbReference type="Proteomes" id="UP000011115">
    <property type="component" value="Unassembled WGS sequence"/>
</dbReference>
<dbReference type="ExpressionAtlas" id="O24384">
    <property type="expression patterns" value="baseline and differential"/>
</dbReference>
<dbReference type="GO" id="GO:0005773">
    <property type="term" value="C:vacuole"/>
    <property type="evidence" value="ECO:0007669"/>
    <property type="project" value="UniProtKB-SubCell"/>
</dbReference>
<dbReference type="GO" id="GO:0004869">
    <property type="term" value="F:cysteine-type endopeptidase inhibitor activity"/>
    <property type="evidence" value="ECO:0007669"/>
    <property type="project" value="UniProtKB-KW"/>
</dbReference>
<dbReference type="CDD" id="cd23372">
    <property type="entry name" value="beta-trefoil_STI_CPI-like"/>
    <property type="match status" value="1"/>
</dbReference>
<dbReference type="Gene3D" id="2.80.10.50">
    <property type="match status" value="1"/>
</dbReference>
<dbReference type="InterPro" id="IPR011065">
    <property type="entry name" value="Kunitz_inhibitor_STI-like_sf"/>
</dbReference>
<dbReference type="InterPro" id="IPR002160">
    <property type="entry name" value="Prot_inh_Kunz-lg"/>
</dbReference>
<dbReference type="PANTHER" id="PTHR33107:SF44">
    <property type="entry name" value="CYSTEINE PROTEASE INHIBITOR 1"/>
    <property type="match status" value="1"/>
</dbReference>
<dbReference type="PANTHER" id="PTHR33107">
    <property type="entry name" value="KUNITZ TRYPSIN INHIBITOR 2"/>
    <property type="match status" value="1"/>
</dbReference>
<dbReference type="Pfam" id="PF00197">
    <property type="entry name" value="Kunitz_legume"/>
    <property type="match status" value="1"/>
</dbReference>
<dbReference type="SMART" id="SM00452">
    <property type="entry name" value="STI"/>
    <property type="match status" value="1"/>
</dbReference>
<dbReference type="SUPFAM" id="SSF50386">
    <property type="entry name" value="STI-like"/>
    <property type="match status" value="1"/>
</dbReference>
<dbReference type="PROSITE" id="PS00283">
    <property type="entry name" value="SOYBEAN_KUNITZ"/>
    <property type="match status" value="1"/>
</dbReference>
<keyword id="KW-1015">Disulfide bond</keyword>
<keyword id="KW-0646">Protease inhibitor</keyword>
<keyword id="KW-1185">Reference proteome</keyword>
<keyword id="KW-0732">Signal</keyword>
<keyword id="KW-0789">Thiol protease inhibitor</keyword>
<keyword id="KW-0926">Vacuole</keyword>
<sequence length="221" mass="24694">IPSINILSFLLLSSTLSLVAFARSFTSENPIVLPTTCHDDDNLVLPEVYDQDGNPLRIGERYIIKNPLLGAGAVYLDNIGNLQCPNAVLQHMSIPQFLGKGTPVVFIRKSESDYGDVVRLMTAVYIKFFVKTTKLCVDETVWKVNNEQLVVTGGNVGNENDIFKIKKTDLVIRGMKNVYKLLHCPSHLECKNIGSTFKNGYPRLVTVNDEKDFIPFVFIKA</sequence>
<evidence type="ECO:0000250" key="1"/>
<evidence type="ECO:0000305" key="2"/>